<evidence type="ECO:0000255" key="1">
    <source>
        <dbReference type="HAMAP-Rule" id="MF_00281"/>
    </source>
</evidence>
<organism>
    <name type="scientific">Listeria monocytogenes serotype 4b (strain CLIP80459)</name>
    <dbReference type="NCBI Taxonomy" id="568819"/>
    <lineage>
        <taxon>Bacteria</taxon>
        <taxon>Bacillati</taxon>
        <taxon>Bacillota</taxon>
        <taxon>Bacilli</taxon>
        <taxon>Bacillales</taxon>
        <taxon>Listeriaceae</taxon>
        <taxon>Listeria</taxon>
    </lineage>
</organism>
<keyword id="KW-0030">Aminoacyl-tRNA synthetase</keyword>
<keyword id="KW-0067">ATP-binding</keyword>
<keyword id="KW-0963">Cytoplasm</keyword>
<keyword id="KW-0436">Ligase</keyword>
<keyword id="KW-0460">Magnesium</keyword>
<keyword id="KW-0479">Metal-binding</keyword>
<keyword id="KW-0547">Nucleotide-binding</keyword>
<keyword id="KW-0648">Protein biosynthesis</keyword>
<comment type="catalytic activity">
    <reaction evidence="1">
        <text>tRNA(Phe) + L-phenylalanine + ATP = L-phenylalanyl-tRNA(Phe) + AMP + diphosphate + H(+)</text>
        <dbReference type="Rhea" id="RHEA:19413"/>
        <dbReference type="Rhea" id="RHEA-COMP:9668"/>
        <dbReference type="Rhea" id="RHEA-COMP:9699"/>
        <dbReference type="ChEBI" id="CHEBI:15378"/>
        <dbReference type="ChEBI" id="CHEBI:30616"/>
        <dbReference type="ChEBI" id="CHEBI:33019"/>
        <dbReference type="ChEBI" id="CHEBI:58095"/>
        <dbReference type="ChEBI" id="CHEBI:78442"/>
        <dbReference type="ChEBI" id="CHEBI:78531"/>
        <dbReference type="ChEBI" id="CHEBI:456215"/>
        <dbReference type="EC" id="6.1.1.20"/>
    </reaction>
</comment>
<comment type="cofactor">
    <cofactor evidence="1">
        <name>Mg(2+)</name>
        <dbReference type="ChEBI" id="CHEBI:18420"/>
    </cofactor>
    <text evidence="1">Binds 2 magnesium ions per tetramer.</text>
</comment>
<comment type="subunit">
    <text evidence="1">Tetramer of two alpha and two beta subunits.</text>
</comment>
<comment type="subcellular location">
    <subcellularLocation>
        <location evidence="1">Cytoplasm</location>
    </subcellularLocation>
</comment>
<comment type="similarity">
    <text evidence="1">Belongs to the class-II aminoacyl-tRNA synthetase family. Phe-tRNA synthetase alpha subunit type 1 subfamily.</text>
</comment>
<dbReference type="EC" id="6.1.1.20" evidence="1"/>
<dbReference type="EMBL" id="FM242711">
    <property type="protein sequence ID" value="CAS04992.1"/>
    <property type="molecule type" value="Genomic_DNA"/>
</dbReference>
<dbReference type="RefSeq" id="WP_012681261.1">
    <property type="nucleotide sequence ID" value="NC_012488.1"/>
</dbReference>
<dbReference type="SMR" id="C1L2C6"/>
<dbReference type="KEGG" id="lmc:Lm4b_01226"/>
<dbReference type="HOGENOM" id="CLU_025086_0_1_9"/>
<dbReference type="GO" id="GO:0005737">
    <property type="term" value="C:cytoplasm"/>
    <property type="evidence" value="ECO:0007669"/>
    <property type="project" value="UniProtKB-SubCell"/>
</dbReference>
<dbReference type="GO" id="GO:0005524">
    <property type="term" value="F:ATP binding"/>
    <property type="evidence" value="ECO:0007669"/>
    <property type="project" value="UniProtKB-UniRule"/>
</dbReference>
<dbReference type="GO" id="GO:0140096">
    <property type="term" value="F:catalytic activity, acting on a protein"/>
    <property type="evidence" value="ECO:0007669"/>
    <property type="project" value="UniProtKB-ARBA"/>
</dbReference>
<dbReference type="GO" id="GO:0000287">
    <property type="term" value="F:magnesium ion binding"/>
    <property type="evidence" value="ECO:0007669"/>
    <property type="project" value="UniProtKB-UniRule"/>
</dbReference>
<dbReference type="GO" id="GO:0004826">
    <property type="term" value="F:phenylalanine-tRNA ligase activity"/>
    <property type="evidence" value="ECO:0007669"/>
    <property type="project" value="UniProtKB-UniRule"/>
</dbReference>
<dbReference type="GO" id="GO:0016740">
    <property type="term" value="F:transferase activity"/>
    <property type="evidence" value="ECO:0007669"/>
    <property type="project" value="UniProtKB-ARBA"/>
</dbReference>
<dbReference type="GO" id="GO:0000049">
    <property type="term" value="F:tRNA binding"/>
    <property type="evidence" value="ECO:0007669"/>
    <property type="project" value="InterPro"/>
</dbReference>
<dbReference type="GO" id="GO:0006432">
    <property type="term" value="P:phenylalanyl-tRNA aminoacylation"/>
    <property type="evidence" value="ECO:0007669"/>
    <property type="project" value="UniProtKB-UniRule"/>
</dbReference>
<dbReference type="CDD" id="cd00496">
    <property type="entry name" value="PheRS_alpha_core"/>
    <property type="match status" value="1"/>
</dbReference>
<dbReference type="FunFam" id="3.30.930.10:FF:000003">
    <property type="entry name" value="Phenylalanine--tRNA ligase alpha subunit"/>
    <property type="match status" value="1"/>
</dbReference>
<dbReference type="Gene3D" id="3.30.930.10">
    <property type="entry name" value="Bira Bifunctional Protein, Domain 2"/>
    <property type="match status" value="1"/>
</dbReference>
<dbReference type="HAMAP" id="MF_00281">
    <property type="entry name" value="Phe_tRNA_synth_alpha1"/>
    <property type="match status" value="1"/>
</dbReference>
<dbReference type="InterPro" id="IPR006195">
    <property type="entry name" value="aa-tRNA-synth_II"/>
</dbReference>
<dbReference type="InterPro" id="IPR045864">
    <property type="entry name" value="aa-tRNA-synth_II/BPL/LPL"/>
</dbReference>
<dbReference type="InterPro" id="IPR004529">
    <property type="entry name" value="Phe-tRNA-synth_IIc_asu"/>
</dbReference>
<dbReference type="InterPro" id="IPR004188">
    <property type="entry name" value="Phe-tRNA_ligase_II_N"/>
</dbReference>
<dbReference type="InterPro" id="IPR022911">
    <property type="entry name" value="Phe_tRNA_ligase_alpha1_bac"/>
</dbReference>
<dbReference type="InterPro" id="IPR002319">
    <property type="entry name" value="Phenylalanyl-tRNA_Synthase"/>
</dbReference>
<dbReference type="InterPro" id="IPR010978">
    <property type="entry name" value="tRNA-bd_arm"/>
</dbReference>
<dbReference type="NCBIfam" id="TIGR00468">
    <property type="entry name" value="pheS"/>
    <property type="match status" value="1"/>
</dbReference>
<dbReference type="PANTHER" id="PTHR11538:SF41">
    <property type="entry name" value="PHENYLALANINE--TRNA LIGASE, MITOCHONDRIAL"/>
    <property type="match status" value="1"/>
</dbReference>
<dbReference type="PANTHER" id="PTHR11538">
    <property type="entry name" value="PHENYLALANYL-TRNA SYNTHETASE"/>
    <property type="match status" value="1"/>
</dbReference>
<dbReference type="Pfam" id="PF02912">
    <property type="entry name" value="Phe_tRNA-synt_N"/>
    <property type="match status" value="1"/>
</dbReference>
<dbReference type="Pfam" id="PF01409">
    <property type="entry name" value="tRNA-synt_2d"/>
    <property type="match status" value="1"/>
</dbReference>
<dbReference type="SUPFAM" id="SSF55681">
    <property type="entry name" value="Class II aaRS and biotin synthetases"/>
    <property type="match status" value="1"/>
</dbReference>
<dbReference type="SUPFAM" id="SSF46589">
    <property type="entry name" value="tRNA-binding arm"/>
    <property type="match status" value="1"/>
</dbReference>
<dbReference type="PROSITE" id="PS50862">
    <property type="entry name" value="AA_TRNA_LIGASE_II"/>
    <property type="match status" value="1"/>
</dbReference>
<accession>C1L2C6</accession>
<proteinExistence type="inferred from homology"/>
<feature type="chain" id="PRO_1000204831" description="Phenylalanine--tRNA ligase alpha subunit">
    <location>
        <begin position="1"/>
        <end position="350"/>
    </location>
</feature>
<feature type="binding site" evidence="1">
    <location>
        <position position="257"/>
    </location>
    <ligand>
        <name>Mg(2+)</name>
        <dbReference type="ChEBI" id="CHEBI:18420"/>
        <note>shared with beta subunit</note>
    </ligand>
</feature>
<reference key="1">
    <citation type="journal article" date="2012" name="BMC Genomics">
        <title>Comparative genomics and transcriptomics of lineages I, II, and III strains of Listeria monocytogenes.</title>
        <authorList>
            <person name="Hain T."/>
            <person name="Ghai R."/>
            <person name="Billion A."/>
            <person name="Kuenne C.T."/>
            <person name="Steinweg C."/>
            <person name="Izar B."/>
            <person name="Mohamed W."/>
            <person name="Mraheil M."/>
            <person name="Domann E."/>
            <person name="Schaffrath S."/>
            <person name="Karst U."/>
            <person name="Goesmann A."/>
            <person name="Oehm S."/>
            <person name="Puhler A."/>
            <person name="Merkl R."/>
            <person name="Vorwerk S."/>
            <person name="Glaser P."/>
            <person name="Garrido P."/>
            <person name="Rusniok C."/>
            <person name="Buchrieser C."/>
            <person name="Goebel W."/>
            <person name="Chakraborty T."/>
        </authorList>
    </citation>
    <scope>NUCLEOTIDE SEQUENCE [LARGE SCALE GENOMIC DNA]</scope>
    <source>
        <strain>CLIP80459</strain>
    </source>
</reference>
<gene>
    <name evidence="1" type="primary">pheS</name>
    <name type="ordered locus">Lm4b_01226</name>
</gene>
<protein>
    <recommendedName>
        <fullName evidence="1">Phenylalanine--tRNA ligase alpha subunit</fullName>
        <ecNumber evidence="1">6.1.1.20</ecNumber>
    </recommendedName>
    <alternativeName>
        <fullName evidence="1">Phenylalanyl-tRNA synthetase alpha subunit</fullName>
        <shortName evidence="1">PheRS</shortName>
    </alternativeName>
</protein>
<sequence length="350" mass="39399">MLEQLQTLKNEAETQINEASDLKTLNDLRVKYLGKKGPMTEIMKQMGKLSAEERPKMGSLANEVRTALTEAISSKQQILETEAINEKLKSETIDVTLPGTAPSIGTKHLLTQVIEEMEDMFIGMGYEIAEGPEVELDYYNFEALNLPKDHPARDMQDSFYITENTLLRTQTSPVQARTMEKHDFSKGPIKVICPGKVYRRDNDDATHSHQFTQIEGLVVGENITFADLKGTLTVLAKTMFGEEREIRLRPSFFPFTEPSVEMDISCFKCGGKGCRVCKGTGWIEILGSGMVHPNVLEMSRIDSTRYSGFAFGLGPERVAMLKYAVDDIRHLYTNDLRFTKQFQSTETGEI</sequence>
<name>SYFA_LISMC</name>